<comment type="subcellular location">
    <subcellularLocation>
        <location>Nucleus</location>
        <location>Nucleolus</location>
    </subcellularLocation>
</comment>
<comment type="similarity">
    <text evidence="2">Belongs to the nucleoplasmin family.</text>
</comment>
<name>NO29_XENLA</name>
<proteinExistence type="evidence at transcript level"/>
<protein>
    <recommendedName>
        <fullName>Nucleoplasmin-like protein NO29</fullName>
    </recommendedName>
    <alternativeName>
        <fullName>NOVA</fullName>
    </alternativeName>
</protein>
<feature type="chain" id="PRO_0000219492" description="Nucleoplasmin-like protein NO29">
    <location>
        <begin position="1"/>
        <end position="183"/>
    </location>
</feature>
<feature type="region of interest" description="Disordered" evidence="1">
    <location>
        <begin position="126"/>
        <end position="183"/>
    </location>
</feature>
<feature type="compositionally biased region" description="Acidic residues" evidence="1">
    <location>
        <begin position="126"/>
        <end position="166"/>
    </location>
</feature>
<sequence>MSGFISSTAAQGPPSPAIESYLFGCELSSKTKQYTFEVNEEDDAVHLVCLQTISLGAGAKDEHNVVEVTAPNYQNKEVTVPLANLKLSCQPMVNVGYFEIEAPVTFRLTSGSGPVFISGRHYVVASDDEDLSGSEEEMEDEEEEEDDDDDDDDDDDDDDDDDEEEITPIKPAKKPLKTLSRTF</sequence>
<organism>
    <name type="scientific">Xenopus laevis</name>
    <name type="common">African clawed frog</name>
    <dbReference type="NCBI Taxonomy" id="8355"/>
    <lineage>
        <taxon>Eukaryota</taxon>
        <taxon>Metazoa</taxon>
        <taxon>Chordata</taxon>
        <taxon>Craniata</taxon>
        <taxon>Vertebrata</taxon>
        <taxon>Euteleostomi</taxon>
        <taxon>Amphibia</taxon>
        <taxon>Batrachia</taxon>
        <taxon>Anura</taxon>
        <taxon>Pipoidea</taxon>
        <taxon>Pipidae</taxon>
        <taxon>Xenopodinae</taxon>
        <taxon>Xenopus</taxon>
        <taxon>Xenopus</taxon>
    </lineage>
</organism>
<accession>O42584</accession>
<reference key="1">
    <citation type="journal article" date="1997" name="Proc. Natl. Acad. Sci. U.S.A.">
        <title>Identification of a small, very acidic constitutive nucleolar protein (NO29) as a member of the nucleoplasmin family.</title>
        <authorList>
            <person name="Zirwes R.R.F."/>
            <person name="Schmidt-Zachmann M.S."/>
            <person name="Franke W.W."/>
        </authorList>
    </citation>
    <scope>NUCLEOTIDE SEQUENCE [MRNA]</scope>
    <source>
        <tissue>Kidney</tissue>
    </source>
</reference>
<keyword id="KW-0539">Nucleus</keyword>
<keyword id="KW-1185">Reference proteome</keyword>
<dbReference type="EMBL" id="Z85983">
    <property type="protein sequence ID" value="CAB06652.1"/>
    <property type="molecule type" value="mRNA"/>
</dbReference>
<dbReference type="RefSeq" id="NP_001081700.1">
    <property type="nucleotide sequence ID" value="NM_001088231.1"/>
</dbReference>
<dbReference type="SMR" id="O42584"/>
<dbReference type="BioGRID" id="99340">
    <property type="interactions" value="1"/>
</dbReference>
<dbReference type="DNASU" id="398005"/>
<dbReference type="GeneID" id="398005"/>
<dbReference type="KEGG" id="xla:398005"/>
<dbReference type="AGR" id="Xenbase:XB-GENE-17345983"/>
<dbReference type="CTD" id="398005"/>
<dbReference type="Xenbase" id="XB-GENE-17345983">
    <property type="gene designation" value="npm3.L"/>
</dbReference>
<dbReference type="OrthoDB" id="9900353at2759"/>
<dbReference type="Proteomes" id="UP000186698">
    <property type="component" value="Chromosome 7L"/>
</dbReference>
<dbReference type="Bgee" id="398005">
    <property type="expression patterns" value="Expressed in gastrula and 19 other cell types or tissues"/>
</dbReference>
<dbReference type="GO" id="GO:0005737">
    <property type="term" value="C:cytoplasm"/>
    <property type="evidence" value="ECO:0000318"/>
    <property type="project" value="GO_Central"/>
</dbReference>
<dbReference type="GO" id="GO:0005730">
    <property type="term" value="C:nucleolus"/>
    <property type="evidence" value="ECO:0000318"/>
    <property type="project" value="GO_Central"/>
</dbReference>
<dbReference type="GO" id="GO:0005654">
    <property type="term" value="C:nucleoplasm"/>
    <property type="evidence" value="ECO:0000318"/>
    <property type="project" value="GO_Central"/>
</dbReference>
<dbReference type="GO" id="GO:0003682">
    <property type="term" value="F:chromatin binding"/>
    <property type="evidence" value="ECO:0000318"/>
    <property type="project" value="GO_Central"/>
</dbReference>
<dbReference type="GO" id="GO:0042393">
    <property type="term" value="F:histone binding"/>
    <property type="evidence" value="ECO:0000318"/>
    <property type="project" value="GO_Central"/>
</dbReference>
<dbReference type="GO" id="GO:0003723">
    <property type="term" value="F:RNA binding"/>
    <property type="evidence" value="ECO:0000318"/>
    <property type="project" value="GO_Central"/>
</dbReference>
<dbReference type="GO" id="GO:0006338">
    <property type="term" value="P:chromatin remodeling"/>
    <property type="evidence" value="ECO:0000318"/>
    <property type="project" value="GO_Central"/>
</dbReference>
<dbReference type="FunFam" id="2.60.120.340:FF:000011">
    <property type="entry name" value="Nucleophosmin/nucleoplasmin 3"/>
    <property type="match status" value="1"/>
</dbReference>
<dbReference type="Gene3D" id="2.60.120.340">
    <property type="entry name" value="Nucleoplasmin core domain"/>
    <property type="match status" value="1"/>
</dbReference>
<dbReference type="InterPro" id="IPR016024">
    <property type="entry name" value="ARM-type_fold"/>
</dbReference>
<dbReference type="InterPro" id="IPR004301">
    <property type="entry name" value="Nucleoplasmin"/>
</dbReference>
<dbReference type="InterPro" id="IPR024057">
    <property type="entry name" value="Nucleoplasmin_core_dom"/>
</dbReference>
<dbReference type="InterPro" id="IPR036824">
    <property type="entry name" value="Nucleoplasmin_core_dom_sf"/>
</dbReference>
<dbReference type="PANTHER" id="PTHR22747">
    <property type="entry name" value="NUCLEOPLASMIN"/>
    <property type="match status" value="1"/>
</dbReference>
<dbReference type="PANTHER" id="PTHR22747:SF13">
    <property type="entry name" value="NUCLEOPLASMIN-3"/>
    <property type="match status" value="1"/>
</dbReference>
<dbReference type="Pfam" id="PF03066">
    <property type="entry name" value="Nucleoplasmin"/>
    <property type="match status" value="1"/>
</dbReference>
<dbReference type="SUPFAM" id="SSF48371">
    <property type="entry name" value="ARM repeat"/>
    <property type="match status" value="1"/>
</dbReference>
<dbReference type="SUPFAM" id="SSF69203">
    <property type="entry name" value="Nucleoplasmin-like core domain"/>
    <property type="match status" value="1"/>
</dbReference>
<evidence type="ECO:0000256" key="1">
    <source>
        <dbReference type="SAM" id="MobiDB-lite"/>
    </source>
</evidence>
<evidence type="ECO:0000305" key="2"/>